<accession>B7KH59</accession>
<organism>
    <name type="scientific">Gloeothece citriformis (strain PCC 7424)</name>
    <name type="common">Cyanothece sp. (strain PCC 7424)</name>
    <dbReference type="NCBI Taxonomy" id="65393"/>
    <lineage>
        <taxon>Bacteria</taxon>
        <taxon>Bacillati</taxon>
        <taxon>Cyanobacteriota</taxon>
        <taxon>Cyanophyceae</taxon>
        <taxon>Oscillatoriophycideae</taxon>
        <taxon>Chroococcales</taxon>
        <taxon>Aphanothecaceae</taxon>
        <taxon>Gloeothece</taxon>
        <taxon>Gloeothece citriformis</taxon>
    </lineage>
</organism>
<name>PSBJ_GLOC7</name>
<protein>
    <recommendedName>
        <fullName evidence="1">Photosystem II reaction center protein J</fullName>
        <shortName evidence="1">PSII-J</shortName>
    </recommendedName>
</protein>
<evidence type="ECO:0000255" key="1">
    <source>
        <dbReference type="HAMAP-Rule" id="MF_01305"/>
    </source>
</evidence>
<gene>
    <name evidence="1" type="primary">psbJ</name>
    <name type="ordered locus">PCC7424_0812</name>
</gene>
<comment type="function">
    <text evidence="1">One of the components of the core complex of photosystem II (PSII). PSII is a light-driven water:plastoquinone oxidoreductase that uses light energy to abstract electrons from H(2)O, generating O(2) and a proton gradient subsequently used for ATP formation. It consists of a core antenna complex that captures photons, and an electron transfer chain that converts photonic excitation into a charge separation.</text>
</comment>
<comment type="subunit">
    <text evidence="1">PSII is composed of 1 copy each of membrane proteins PsbA, PsbB, PsbC, PsbD, PsbE, PsbF, PsbH, PsbI, PsbJ, PsbK, PsbL, PsbM, PsbT, PsbX, PsbY, PsbZ, Psb30/Ycf12, peripheral proteins PsbO, CyanoQ (PsbQ), PsbU, PsbV and a large number of cofactors. It forms dimeric complexes.</text>
</comment>
<comment type="subcellular location">
    <subcellularLocation>
        <location evidence="1">Cellular thylakoid membrane</location>
        <topology evidence="1">Single-pass membrane protein</topology>
    </subcellularLocation>
</comment>
<comment type="similarity">
    <text evidence="1">Belongs to the PsbJ family.</text>
</comment>
<dbReference type="EMBL" id="CP001291">
    <property type="protein sequence ID" value="ACK69268.1"/>
    <property type="molecule type" value="Genomic_DNA"/>
</dbReference>
<dbReference type="RefSeq" id="WP_012598215.1">
    <property type="nucleotide sequence ID" value="NC_011729.1"/>
</dbReference>
<dbReference type="SMR" id="B7KH59"/>
<dbReference type="STRING" id="65393.PCC7424_0812"/>
<dbReference type="KEGG" id="cyc:PCC7424_0812"/>
<dbReference type="eggNOG" id="ENOG5033ABP">
    <property type="taxonomic scope" value="Bacteria"/>
</dbReference>
<dbReference type="HOGENOM" id="CLU_215151_0_0_3"/>
<dbReference type="Proteomes" id="UP000002384">
    <property type="component" value="Chromosome"/>
</dbReference>
<dbReference type="GO" id="GO:0009539">
    <property type="term" value="C:photosystem II reaction center"/>
    <property type="evidence" value="ECO:0007669"/>
    <property type="project" value="InterPro"/>
</dbReference>
<dbReference type="GO" id="GO:0031676">
    <property type="term" value="C:plasma membrane-derived thylakoid membrane"/>
    <property type="evidence" value="ECO:0007669"/>
    <property type="project" value="UniProtKB-SubCell"/>
</dbReference>
<dbReference type="GO" id="GO:0015979">
    <property type="term" value="P:photosynthesis"/>
    <property type="evidence" value="ECO:0007669"/>
    <property type="project" value="UniProtKB-UniRule"/>
</dbReference>
<dbReference type="Gene3D" id="6.10.250.2070">
    <property type="match status" value="1"/>
</dbReference>
<dbReference type="HAMAP" id="MF_01305">
    <property type="entry name" value="PSII_PsbJ"/>
    <property type="match status" value="1"/>
</dbReference>
<dbReference type="InterPro" id="IPR002682">
    <property type="entry name" value="PSII_PsbJ"/>
</dbReference>
<dbReference type="InterPro" id="IPR037267">
    <property type="entry name" value="PSII_PsbJ_sf"/>
</dbReference>
<dbReference type="NCBIfam" id="NF002722">
    <property type="entry name" value="PRK02565.1"/>
    <property type="match status" value="1"/>
</dbReference>
<dbReference type="PANTHER" id="PTHR34812">
    <property type="entry name" value="PHOTOSYSTEM II REACTION CENTER PROTEIN J"/>
    <property type="match status" value="1"/>
</dbReference>
<dbReference type="PANTHER" id="PTHR34812:SF3">
    <property type="entry name" value="PHOTOSYSTEM II REACTION CENTER PROTEIN J"/>
    <property type="match status" value="1"/>
</dbReference>
<dbReference type="Pfam" id="PF01788">
    <property type="entry name" value="PsbJ"/>
    <property type="match status" value="1"/>
</dbReference>
<dbReference type="SUPFAM" id="SSF161021">
    <property type="entry name" value="Photosystem II reaction center protein J, PsbJ"/>
    <property type="match status" value="1"/>
</dbReference>
<sequence>MFAEGRIPLWVVAVIAGLGVIAVVGLFFYGAYAGLGSSL</sequence>
<keyword id="KW-0472">Membrane</keyword>
<keyword id="KW-0602">Photosynthesis</keyword>
<keyword id="KW-0604">Photosystem II</keyword>
<keyword id="KW-0674">Reaction center</keyword>
<keyword id="KW-1185">Reference proteome</keyword>
<keyword id="KW-0793">Thylakoid</keyword>
<keyword id="KW-0812">Transmembrane</keyword>
<keyword id="KW-1133">Transmembrane helix</keyword>
<proteinExistence type="inferred from homology"/>
<feature type="chain" id="PRO_1000140663" description="Photosystem II reaction center protein J">
    <location>
        <begin position="1"/>
        <end position="39"/>
    </location>
</feature>
<feature type="transmembrane region" description="Helical" evidence="1">
    <location>
        <begin position="7"/>
        <end position="27"/>
    </location>
</feature>
<reference key="1">
    <citation type="journal article" date="2011" name="MBio">
        <title>Novel metabolic attributes of the genus Cyanothece, comprising a group of unicellular nitrogen-fixing Cyanobacteria.</title>
        <authorList>
            <person name="Bandyopadhyay A."/>
            <person name="Elvitigala T."/>
            <person name="Welsh E."/>
            <person name="Stockel J."/>
            <person name="Liberton M."/>
            <person name="Min H."/>
            <person name="Sherman L.A."/>
            <person name="Pakrasi H.B."/>
        </authorList>
    </citation>
    <scope>NUCLEOTIDE SEQUENCE [LARGE SCALE GENOMIC DNA]</scope>
    <source>
        <strain>PCC 7424</strain>
    </source>
</reference>